<accession>C5DHM2</accession>
<gene>
    <name type="primary">RRG8</name>
    <name type="ordered locus">KLTH0E05500g</name>
</gene>
<proteinExistence type="inferred from homology"/>
<organism>
    <name type="scientific">Lachancea thermotolerans (strain ATCC 56472 / CBS 6340 / NRRL Y-8284)</name>
    <name type="common">Yeast</name>
    <name type="synonym">Kluyveromyces thermotolerans</name>
    <dbReference type="NCBI Taxonomy" id="559295"/>
    <lineage>
        <taxon>Eukaryota</taxon>
        <taxon>Fungi</taxon>
        <taxon>Dikarya</taxon>
        <taxon>Ascomycota</taxon>
        <taxon>Saccharomycotina</taxon>
        <taxon>Saccharomycetes</taxon>
        <taxon>Saccharomycetales</taxon>
        <taxon>Saccharomycetaceae</taxon>
        <taxon>Lachancea</taxon>
    </lineage>
</organism>
<reference key="1">
    <citation type="journal article" date="2009" name="Genome Res.">
        <title>Comparative genomics of protoploid Saccharomycetaceae.</title>
        <authorList>
            <consortium name="The Genolevures Consortium"/>
            <person name="Souciet J.-L."/>
            <person name="Dujon B."/>
            <person name="Gaillardin C."/>
            <person name="Johnston M."/>
            <person name="Baret P.V."/>
            <person name="Cliften P."/>
            <person name="Sherman D.J."/>
            <person name="Weissenbach J."/>
            <person name="Westhof E."/>
            <person name="Wincker P."/>
            <person name="Jubin C."/>
            <person name="Poulain J."/>
            <person name="Barbe V."/>
            <person name="Segurens B."/>
            <person name="Artiguenave F."/>
            <person name="Anthouard V."/>
            <person name="Vacherie B."/>
            <person name="Val M.-E."/>
            <person name="Fulton R.S."/>
            <person name="Minx P."/>
            <person name="Wilson R."/>
            <person name="Durrens P."/>
            <person name="Jean G."/>
            <person name="Marck C."/>
            <person name="Martin T."/>
            <person name="Nikolski M."/>
            <person name="Rolland T."/>
            <person name="Seret M.-L."/>
            <person name="Casaregola S."/>
            <person name="Despons L."/>
            <person name="Fairhead C."/>
            <person name="Fischer G."/>
            <person name="Lafontaine I."/>
            <person name="Leh V."/>
            <person name="Lemaire M."/>
            <person name="de Montigny J."/>
            <person name="Neuveglise C."/>
            <person name="Thierry A."/>
            <person name="Blanc-Lenfle I."/>
            <person name="Bleykasten C."/>
            <person name="Diffels J."/>
            <person name="Fritsch E."/>
            <person name="Frangeul L."/>
            <person name="Goeffon A."/>
            <person name="Jauniaux N."/>
            <person name="Kachouri-Lafond R."/>
            <person name="Payen C."/>
            <person name="Potier S."/>
            <person name="Pribylova L."/>
            <person name="Ozanne C."/>
            <person name="Richard G.-F."/>
            <person name="Sacerdot C."/>
            <person name="Straub M.-L."/>
            <person name="Talla E."/>
        </authorList>
    </citation>
    <scope>NUCLEOTIDE SEQUENCE [LARGE SCALE GENOMIC DNA]</scope>
    <source>
        <strain>ATCC 56472 / CBS 6340 / NRRL Y-8284</strain>
    </source>
</reference>
<comment type="function">
    <text evidence="1">Required for respiratory activity and maintenance and expression of the mitochondrial genome.</text>
</comment>
<comment type="subcellular location">
    <subcellularLocation>
        <location evidence="1">Mitochondrion</location>
    </subcellularLocation>
</comment>
<comment type="similarity">
    <text evidence="2">Belongs to the RRG8 family.</text>
</comment>
<sequence length="278" mass="31307">MSKPSVLKGCLESLVALEKTKRIPKKPSCDASPLISNFENWSGKPRKLYLRDARSMKRQGLPYELNSNMFAQLLASPMRLDKITRVRAPKELLVQIKLRKADTDISAARGKPFELRPSFGMERGHPTSYVSNSVALVHKYASSAMKWLPSSANSTIRHINQADVATQPEWYSQAYTEQMLGSLREALSSTLMHLGKAPESDPRDVIIVCNPQLPAISLRKSENPFIALATTVLNLYPIKDPELEKVVNNRDIELCSSKHRSLCFLIYRLLAFQADRII</sequence>
<name>RRG8_LACTC</name>
<dbReference type="EMBL" id="CU928169">
    <property type="protein sequence ID" value="CAR23283.1"/>
    <property type="molecule type" value="Genomic_DNA"/>
</dbReference>
<dbReference type="RefSeq" id="XP_002553720.1">
    <property type="nucleotide sequence ID" value="XM_002553674.1"/>
</dbReference>
<dbReference type="FunCoup" id="C5DHM2">
    <property type="interactions" value="38"/>
</dbReference>
<dbReference type="STRING" id="559295.C5DHM2"/>
<dbReference type="GeneID" id="8291873"/>
<dbReference type="KEGG" id="lth:KLTH0E05500g"/>
<dbReference type="eggNOG" id="ENOG502S46Y">
    <property type="taxonomic scope" value="Eukaryota"/>
</dbReference>
<dbReference type="HOGENOM" id="CLU_090059_0_0_1"/>
<dbReference type="InParanoid" id="C5DHM2"/>
<dbReference type="OMA" id="SHEGWIM"/>
<dbReference type="OrthoDB" id="4035333at2759"/>
<dbReference type="Proteomes" id="UP000002036">
    <property type="component" value="Chromosome E"/>
</dbReference>
<dbReference type="GO" id="GO:0005739">
    <property type="term" value="C:mitochondrion"/>
    <property type="evidence" value="ECO:0007669"/>
    <property type="project" value="UniProtKB-SubCell"/>
</dbReference>
<dbReference type="GO" id="GO:0000002">
    <property type="term" value="P:mitochondrial genome maintenance"/>
    <property type="evidence" value="ECO:0007669"/>
    <property type="project" value="InterPro"/>
</dbReference>
<dbReference type="InterPro" id="IPR031415">
    <property type="entry name" value="Rrg8"/>
</dbReference>
<dbReference type="Pfam" id="PF17068">
    <property type="entry name" value="RRG8"/>
    <property type="match status" value="1"/>
</dbReference>
<protein>
    <recommendedName>
        <fullName>Required for respiratory growth protein 8, mitochondrial</fullName>
    </recommendedName>
</protein>
<feature type="chain" id="PRO_0000405467" description="Required for respiratory growth protein 8, mitochondrial">
    <location>
        <begin position="1"/>
        <end position="278"/>
    </location>
</feature>
<keyword id="KW-0496">Mitochondrion</keyword>
<keyword id="KW-1185">Reference proteome</keyword>
<evidence type="ECO:0000250" key="1"/>
<evidence type="ECO:0000305" key="2"/>